<dbReference type="EMBL" id="CP000857">
    <property type="protein sequence ID" value="ACN47151.1"/>
    <property type="molecule type" value="Genomic_DNA"/>
</dbReference>
<dbReference type="RefSeq" id="WP_001274931.1">
    <property type="nucleotide sequence ID" value="NC_012125.1"/>
</dbReference>
<dbReference type="SMR" id="C0PXJ3"/>
<dbReference type="KEGG" id="sei:SPC_3063"/>
<dbReference type="HOGENOM" id="CLU_086669_0_0_6"/>
<dbReference type="Proteomes" id="UP000001599">
    <property type="component" value="Chromosome"/>
</dbReference>
<dbReference type="GO" id="GO:0005737">
    <property type="term" value="C:cytoplasm"/>
    <property type="evidence" value="ECO:0007669"/>
    <property type="project" value="UniProtKB-SubCell"/>
</dbReference>
<dbReference type="GO" id="GO:0003677">
    <property type="term" value="F:DNA binding"/>
    <property type="evidence" value="ECO:0007669"/>
    <property type="project" value="InterPro"/>
</dbReference>
<dbReference type="GO" id="GO:0004519">
    <property type="term" value="F:endonuclease activity"/>
    <property type="evidence" value="ECO:0007669"/>
    <property type="project" value="UniProtKB-UniRule"/>
</dbReference>
<dbReference type="GO" id="GO:0006304">
    <property type="term" value="P:DNA modification"/>
    <property type="evidence" value="ECO:0007669"/>
    <property type="project" value="InterPro"/>
</dbReference>
<dbReference type="GO" id="GO:0006298">
    <property type="term" value="P:mismatch repair"/>
    <property type="evidence" value="ECO:0007669"/>
    <property type="project" value="UniProtKB-UniRule"/>
</dbReference>
<dbReference type="CDD" id="cd00583">
    <property type="entry name" value="MutH-like"/>
    <property type="match status" value="1"/>
</dbReference>
<dbReference type="FunFam" id="3.40.600.10:FF:000001">
    <property type="entry name" value="DNA mismatch repair protein MutH"/>
    <property type="match status" value="1"/>
</dbReference>
<dbReference type="Gene3D" id="3.40.600.10">
    <property type="entry name" value="DNA mismatch repair MutH/Restriction endonuclease, type II"/>
    <property type="match status" value="1"/>
</dbReference>
<dbReference type="HAMAP" id="MF_00759">
    <property type="entry name" value="MutH"/>
    <property type="match status" value="1"/>
</dbReference>
<dbReference type="InterPro" id="IPR004230">
    <property type="entry name" value="DNA_mismatch_repair_MutH"/>
</dbReference>
<dbReference type="InterPro" id="IPR011337">
    <property type="entry name" value="DNA_rep_MutH/RE_typeII_Sau3AI"/>
</dbReference>
<dbReference type="InterPro" id="IPR037057">
    <property type="entry name" value="DNA_rep_MutH/T2_RE_sf"/>
</dbReference>
<dbReference type="InterPro" id="IPR011335">
    <property type="entry name" value="Restrct_endonuc-II-like"/>
</dbReference>
<dbReference type="NCBIfam" id="TIGR02248">
    <property type="entry name" value="mutH_TIGR"/>
    <property type="match status" value="1"/>
</dbReference>
<dbReference type="NCBIfam" id="NF003458">
    <property type="entry name" value="PRK05070.1"/>
    <property type="match status" value="1"/>
</dbReference>
<dbReference type="Pfam" id="PF02976">
    <property type="entry name" value="MutH"/>
    <property type="match status" value="1"/>
</dbReference>
<dbReference type="SMART" id="SM00927">
    <property type="entry name" value="MutH"/>
    <property type="match status" value="1"/>
</dbReference>
<dbReference type="SUPFAM" id="SSF52980">
    <property type="entry name" value="Restriction endonuclease-like"/>
    <property type="match status" value="1"/>
</dbReference>
<keyword id="KW-0963">Cytoplasm</keyword>
<keyword id="KW-0227">DNA damage</keyword>
<keyword id="KW-0234">DNA repair</keyword>
<keyword id="KW-0255">Endonuclease</keyword>
<keyword id="KW-0378">Hydrolase</keyword>
<keyword id="KW-0540">Nuclease</keyword>
<accession>C0PXJ3</accession>
<name>MUTH_SALPC</name>
<proteinExistence type="inferred from homology"/>
<comment type="function">
    <text evidence="1">Sequence-specific endonuclease that cleaves unmethylated GATC sequences. It is involved in DNA mismatch repair.</text>
</comment>
<comment type="subcellular location">
    <subcellularLocation>
        <location evidence="1">Cytoplasm</location>
    </subcellularLocation>
</comment>
<comment type="similarity">
    <text evidence="1">Belongs to the MutH family.</text>
</comment>
<evidence type="ECO:0000255" key="1">
    <source>
        <dbReference type="HAMAP-Rule" id="MF_00759"/>
    </source>
</evidence>
<sequence>MSALCPLLTPPASEALLLAQARQLSGYTLGELAAMAGITTPKDLKRDKGWIGVLLEIWLGASAGSKPEQDFAALGVELKTIPVDSLGRPLETTFVCVAPLTGNSGVTWETSHVRHKLKRVLWVPVEGDRSIPLAERRVGSPLLWSPSEEEDRQLRLDWEELMDMIVLGQVERITARHGEVLQLRPKAANSRALTEAIGARGEPILTLPRGFYLKKNFTQALLARHFLLQNP</sequence>
<gene>
    <name evidence="1" type="primary">mutH</name>
    <name type="ordered locus">SPC_3063</name>
</gene>
<feature type="chain" id="PRO_1000148402" description="DNA mismatch repair protein MutH">
    <location>
        <begin position="1"/>
        <end position="231"/>
    </location>
</feature>
<organism>
    <name type="scientific">Salmonella paratyphi C (strain RKS4594)</name>
    <dbReference type="NCBI Taxonomy" id="476213"/>
    <lineage>
        <taxon>Bacteria</taxon>
        <taxon>Pseudomonadati</taxon>
        <taxon>Pseudomonadota</taxon>
        <taxon>Gammaproteobacteria</taxon>
        <taxon>Enterobacterales</taxon>
        <taxon>Enterobacteriaceae</taxon>
        <taxon>Salmonella</taxon>
    </lineage>
</organism>
<protein>
    <recommendedName>
        <fullName evidence="1">DNA mismatch repair protein MutH</fullName>
    </recommendedName>
    <alternativeName>
        <fullName evidence="1">Methyl-directed mismatch repair protein</fullName>
    </alternativeName>
</protein>
<reference key="1">
    <citation type="journal article" date="2009" name="PLoS ONE">
        <title>Salmonella paratyphi C: genetic divergence from Salmonella choleraesuis and pathogenic convergence with Salmonella typhi.</title>
        <authorList>
            <person name="Liu W.-Q."/>
            <person name="Feng Y."/>
            <person name="Wang Y."/>
            <person name="Zou Q.-H."/>
            <person name="Chen F."/>
            <person name="Guo J.-T."/>
            <person name="Peng Y.-H."/>
            <person name="Jin Y."/>
            <person name="Li Y.-G."/>
            <person name="Hu S.-N."/>
            <person name="Johnston R.N."/>
            <person name="Liu G.-R."/>
            <person name="Liu S.-L."/>
        </authorList>
    </citation>
    <scope>NUCLEOTIDE SEQUENCE [LARGE SCALE GENOMIC DNA]</scope>
    <source>
        <strain>RKS4594</strain>
    </source>
</reference>